<sequence length="160" mass="18284">MSDRIYLTKQGYNRMRDELNLLKTVVRKEVLEKIAEARAHGDLSENAEYEAAREQQAQMESKIVDLENKLTRASILDPKQIRTDRVYILTSVKLRNLDETDDEIIEYTLVSSEEADTDQGKISVRSPVGKALIGKAVGEKVQIHVPKGELHYEILEIFVK</sequence>
<accession>B4S9B2</accession>
<protein>
    <recommendedName>
        <fullName evidence="1">Transcription elongation factor GreA</fullName>
    </recommendedName>
    <alternativeName>
        <fullName evidence="1">Transcript cleavage factor GreA</fullName>
    </alternativeName>
</protein>
<reference key="1">
    <citation type="submission" date="2008-06" db="EMBL/GenBank/DDBJ databases">
        <title>Complete sequence of chromosome of Prosthecochloris aestuarii DSM 271.</title>
        <authorList>
            <consortium name="US DOE Joint Genome Institute"/>
            <person name="Lucas S."/>
            <person name="Copeland A."/>
            <person name="Lapidus A."/>
            <person name="Glavina del Rio T."/>
            <person name="Dalin E."/>
            <person name="Tice H."/>
            <person name="Bruce D."/>
            <person name="Goodwin L."/>
            <person name="Pitluck S."/>
            <person name="Schmutz J."/>
            <person name="Larimer F."/>
            <person name="Land M."/>
            <person name="Hauser L."/>
            <person name="Kyrpides N."/>
            <person name="Anderson I."/>
            <person name="Liu Z."/>
            <person name="Li T."/>
            <person name="Zhao F."/>
            <person name="Overmann J."/>
            <person name="Bryant D.A."/>
            <person name="Richardson P."/>
        </authorList>
    </citation>
    <scope>NUCLEOTIDE SEQUENCE [LARGE SCALE GENOMIC DNA]</scope>
    <source>
        <strain>DSM 271 / SK 413</strain>
    </source>
</reference>
<dbReference type="EMBL" id="CP001108">
    <property type="protein sequence ID" value="ACF46582.1"/>
    <property type="molecule type" value="Genomic_DNA"/>
</dbReference>
<dbReference type="RefSeq" id="WP_012506115.1">
    <property type="nucleotide sequence ID" value="NC_011059.1"/>
</dbReference>
<dbReference type="SMR" id="B4S9B2"/>
<dbReference type="STRING" id="290512.Paes_1564"/>
<dbReference type="KEGG" id="paa:Paes_1564"/>
<dbReference type="eggNOG" id="COG0782">
    <property type="taxonomic scope" value="Bacteria"/>
</dbReference>
<dbReference type="HOGENOM" id="CLU_101379_2_0_10"/>
<dbReference type="Proteomes" id="UP000002725">
    <property type="component" value="Chromosome"/>
</dbReference>
<dbReference type="GO" id="GO:0003677">
    <property type="term" value="F:DNA binding"/>
    <property type="evidence" value="ECO:0007669"/>
    <property type="project" value="UniProtKB-UniRule"/>
</dbReference>
<dbReference type="GO" id="GO:0070063">
    <property type="term" value="F:RNA polymerase binding"/>
    <property type="evidence" value="ECO:0007669"/>
    <property type="project" value="InterPro"/>
</dbReference>
<dbReference type="GO" id="GO:0006354">
    <property type="term" value="P:DNA-templated transcription elongation"/>
    <property type="evidence" value="ECO:0007669"/>
    <property type="project" value="TreeGrafter"/>
</dbReference>
<dbReference type="GO" id="GO:0032784">
    <property type="term" value="P:regulation of DNA-templated transcription elongation"/>
    <property type="evidence" value="ECO:0007669"/>
    <property type="project" value="UniProtKB-UniRule"/>
</dbReference>
<dbReference type="FunFam" id="1.10.287.180:FF:000001">
    <property type="entry name" value="Transcription elongation factor GreA"/>
    <property type="match status" value="1"/>
</dbReference>
<dbReference type="FunFam" id="3.10.50.30:FF:000001">
    <property type="entry name" value="Transcription elongation factor GreA"/>
    <property type="match status" value="1"/>
</dbReference>
<dbReference type="Gene3D" id="3.10.50.30">
    <property type="entry name" value="Transcription elongation factor, GreA/GreB, C-terminal domain"/>
    <property type="match status" value="1"/>
</dbReference>
<dbReference type="Gene3D" id="1.10.287.180">
    <property type="entry name" value="Transcription elongation factor, GreA/GreB, N-terminal domain"/>
    <property type="match status" value="1"/>
</dbReference>
<dbReference type="HAMAP" id="MF_00105">
    <property type="entry name" value="GreA_GreB"/>
    <property type="match status" value="1"/>
</dbReference>
<dbReference type="InterPro" id="IPR036953">
    <property type="entry name" value="GreA/GreB_C_sf"/>
</dbReference>
<dbReference type="InterPro" id="IPR018151">
    <property type="entry name" value="TF_GreA/GreB_CS"/>
</dbReference>
<dbReference type="InterPro" id="IPR006359">
    <property type="entry name" value="Tscrpt_elong_fac_GreA"/>
</dbReference>
<dbReference type="InterPro" id="IPR028624">
    <property type="entry name" value="Tscrpt_elong_fac_GreA/B"/>
</dbReference>
<dbReference type="InterPro" id="IPR001437">
    <property type="entry name" value="Tscrpt_elong_fac_GreA/B_C"/>
</dbReference>
<dbReference type="InterPro" id="IPR023459">
    <property type="entry name" value="Tscrpt_elong_fac_GreA/B_fam"/>
</dbReference>
<dbReference type="InterPro" id="IPR022691">
    <property type="entry name" value="Tscrpt_elong_fac_GreA/B_N"/>
</dbReference>
<dbReference type="InterPro" id="IPR036805">
    <property type="entry name" value="Tscrpt_elong_fac_GreA/B_N_sf"/>
</dbReference>
<dbReference type="NCBIfam" id="TIGR01462">
    <property type="entry name" value="greA"/>
    <property type="match status" value="1"/>
</dbReference>
<dbReference type="NCBIfam" id="NF001261">
    <property type="entry name" value="PRK00226.1-2"/>
    <property type="match status" value="1"/>
</dbReference>
<dbReference type="NCBIfam" id="NF001263">
    <property type="entry name" value="PRK00226.1-4"/>
    <property type="match status" value="1"/>
</dbReference>
<dbReference type="PANTHER" id="PTHR30437">
    <property type="entry name" value="TRANSCRIPTION ELONGATION FACTOR GREA"/>
    <property type="match status" value="1"/>
</dbReference>
<dbReference type="PANTHER" id="PTHR30437:SF4">
    <property type="entry name" value="TRANSCRIPTION ELONGATION FACTOR GREA"/>
    <property type="match status" value="1"/>
</dbReference>
<dbReference type="Pfam" id="PF01272">
    <property type="entry name" value="GreA_GreB"/>
    <property type="match status" value="1"/>
</dbReference>
<dbReference type="Pfam" id="PF03449">
    <property type="entry name" value="GreA_GreB_N"/>
    <property type="match status" value="1"/>
</dbReference>
<dbReference type="PIRSF" id="PIRSF006092">
    <property type="entry name" value="GreA_GreB"/>
    <property type="match status" value="1"/>
</dbReference>
<dbReference type="SUPFAM" id="SSF54534">
    <property type="entry name" value="FKBP-like"/>
    <property type="match status" value="1"/>
</dbReference>
<dbReference type="SUPFAM" id="SSF46557">
    <property type="entry name" value="GreA transcript cleavage protein, N-terminal domain"/>
    <property type="match status" value="1"/>
</dbReference>
<dbReference type="PROSITE" id="PS00829">
    <property type="entry name" value="GREAB_1"/>
    <property type="match status" value="1"/>
</dbReference>
<dbReference type="PROSITE" id="PS00830">
    <property type="entry name" value="GREAB_2"/>
    <property type="match status" value="1"/>
</dbReference>
<name>GREA_PROA2</name>
<organism>
    <name type="scientific">Prosthecochloris aestuarii (strain DSM 271 / SK 413)</name>
    <dbReference type="NCBI Taxonomy" id="290512"/>
    <lineage>
        <taxon>Bacteria</taxon>
        <taxon>Pseudomonadati</taxon>
        <taxon>Chlorobiota</taxon>
        <taxon>Chlorobiia</taxon>
        <taxon>Chlorobiales</taxon>
        <taxon>Chlorobiaceae</taxon>
        <taxon>Prosthecochloris</taxon>
    </lineage>
</organism>
<keyword id="KW-0175">Coiled coil</keyword>
<keyword id="KW-0238">DNA-binding</keyword>
<keyword id="KW-0804">Transcription</keyword>
<keyword id="KW-0805">Transcription regulation</keyword>
<feature type="chain" id="PRO_1000094188" description="Transcription elongation factor GreA">
    <location>
        <begin position="1"/>
        <end position="160"/>
    </location>
</feature>
<feature type="coiled-coil region" evidence="1">
    <location>
        <begin position="43"/>
        <end position="75"/>
    </location>
</feature>
<evidence type="ECO:0000255" key="1">
    <source>
        <dbReference type="HAMAP-Rule" id="MF_00105"/>
    </source>
</evidence>
<gene>
    <name evidence="1" type="primary">greA</name>
    <name type="ordered locus">Paes_1564</name>
</gene>
<comment type="function">
    <text evidence="1">Necessary for efficient RNA polymerase transcription elongation past template-encoded arresting sites. The arresting sites in DNA have the property of trapping a certain fraction of elongating RNA polymerases that pass through, resulting in locked ternary complexes. Cleavage of the nascent transcript by cleavage factors such as GreA or GreB allows the resumption of elongation from the new 3'terminus. GreA releases sequences of 2 to 3 nucleotides.</text>
</comment>
<comment type="similarity">
    <text evidence="1">Belongs to the GreA/GreB family.</text>
</comment>
<proteinExistence type="inferred from homology"/>